<sequence>MTSAPRPRPTLDDLPLREDLRGKSPYGASQLAVPVRLSTNENPHPPTQALVDDVVRSVGEAAVDLHRYPDRDAVALRTDLANYLTAQTGTRIGFENVWAANGSNEILQQLLQAFGGPGRTAIGFVPSYSMHPIISDGTHTEWVETARADGFGLDIDAAIAVVSDRRPDVVFITSPNNPTGQSVSLTELRRLLDVVPGILIVDEAYGEFSSQPSAVGLIEEYPTRVVVTRTMSKAFAFAGGRLGYLVATPALIDALLLVRLPYHLSSVTQVAARAALRHAQDTLGSVATLIAERERVSKKLASMGFRVIPSDANFVLFGEFADAPAAWQRYLDQGVLIRDVGIPGYLRATTGLADENDAFLRASARIAATDLAPAAASPVGAP</sequence>
<name>HIS8_MYCUA</name>
<comment type="catalytic activity">
    <reaction evidence="1">
        <text>L-histidinol phosphate + 2-oxoglutarate = 3-(imidazol-4-yl)-2-oxopropyl phosphate + L-glutamate</text>
        <dbReference type="Rhea" id="RHEA:23744"/>
        <dbReference type="ChEBI" id="CHEBI:16810"/>
        <dbReference type="ChEBI" id="CHEBI:29985"/>
        <dbReference type="ChEBI" id="CHEBI:57766"/>
        <dbReference type="ChEBI" id="CHEBI:57980"/>
        <dbReference type="EC" id="2.6.1.9"/>
    </reaction>
</comment>
<comment type="cofactor">
    <cofactor evidence="1">
        <name>pyridoxal 5'-phosphate</name>
        <dbReference type="ChEBI" id="CHEBI:597326"/>
    </cofactor>
</comment>
<comment type="pathway">
    <text evidence="1">Amino-acid biosynthesis; L-histidine biosynthesis; L-histidine from 5-phospho-alpha-D-ribose 1-diphosphate: step 7/9.</text>
</comment>
<comment type="subunit">
    <text evidence="1">Homodimer.</text>
</comment>
<comment type="similarity">
    <text evidence="1">Belongs to the class-II pyridoxal-phosphate-dependent aminotransferase family. Histidinol-phosphate aminotransferase subfamily.</text>
</comment>
<gene>
    <name evidence="1" type="primary">hisC</name>
    <name type="ordered locus">MUL_1573</name>
</gene>
<accession>A0PP15</accession>
<feature type="chain" id="PRO_0000319779" description="Histidinol-phosphate aminotransferase">
    <location>
        <begin position="1"/>
        <end position="382"/>
    </location>
</feature>
<feature type="region of interest" description="Disordered" evidence="2">
    <location>
        <begin position="1"/>
        <end position="24"/>
    </location>
</feature>
<feature type="compositionally biased region" description="Basic and acidic residues" evidence="2">
    <location>
        <begin position="9"/>
        <end position="22"/>
    </location>
</feature>
<feature type="modified residue" description="N6-(pyridoxal phosphate)lysine" evidence="1">
    <location>
        <position position="233"/>
    </location>
</feature>
<organism>
    <name type="scientific">Mycobacterium ulcerans (strain Agy99)</name>
    <dbReference type="NCBI Taxonomy" id="362242"/>
    <lineage>
        <taxon>Bacteria</taxon>
        <taxon>Bacillati</taxon>
        <taxon>Actinomycetota</taxon>
        <taxon>Actinomycetes</taxon>
        <taxon>Mycobacteriales</taxon>
        <taxon>Mycobacteriaceae</taxon>
        <taxon>Mycobacterium</taxon>
        <taxon>Mycobacterium ulcerans group</taxon>
    </lineage>
</organism>
<proteinExistence type="inferred from homology"/>
<evidence type="ECO:0000255" key="1">
    <source>
        <dbReference type="HAMAP-Rule" id="MF_01023"/>
    </source>
</evidence>
<evidence type="ECO:0000256" key="2">
    <source>
        <dbReference type="SAM" id="MobiDB-lite"/>
    </source>
</evidence>
<protein>
    <recommendedName>
        <fullName evidence="1">Histidinol-phosphate aminotransferase</fullName>
        <ecNumber evidence="1">2.6.1.9</ecNumber>
    </recommendedName>
    <alternativeName>
        <fullName evidence="1">Imidazole acetol-phosphate transaminase</fullName>
    </alternativeName>
</protein>
<keyword id="KW-0028">Amino-acid biosynthesis</keyword>
<keyword id="KW-0032">Aminotransferase</keyword>
<keyword id="KW-0368">Histidine biosynthesis</keyword>
<keyword id="KW-0663">Pyridoxal phosphate</keyword>
<keyword id="KW-0808">Transferase</keyword>
<dbReference type="EC" id="2.6.1.9" evidence="1"/>
<dbReference type="EMBL" id="CP000325">
    <property type="protein sequence ID" value="ABL04084.1"/>
    <property type="molecule type" value="Genomic_DNA"/>
</dbReference>
<dbReference type="RefSeq" id="WP_011739704.1">
    <property type="nucleotide sequence ID" value="NC_008611.1"/>
</dbReference>
<dbReference type="SMR" id="A0PP15"/>
<dbReference type="KEGG" id="mul:MUL_1573"/>
<dbReference type="eggNOG" id="COG0079">
    <property type="taxonomic scope" value="Bacteria"/>
</dbReference>
<dbReference type="HOGENOM" id="CLU_017584_3_1_11"/>
<dbReference type="UniPathway" id="UPA00031">
    <property type="reaction ID" value="UER00012"/>
</dbReference>
<dbReference type="Proteomes" id="UP000000765">
    <property type="component" value="Chromosome"/>
</dbReference>
<dbReference type="GO" id="GO:0004400">
    <property type="term" value="F:histidinol-phosphate transaminase activity"/>
    <property type="evidence" value="ECO:0007669"/>
    <property type="project" value="UniProtKB-UniRule"/>
</dbReference>
<dbReference type="GO" id="GO:0030170">
    <property type="term" value="F:pyridoxal phosphate binding"/>
    <property type="evidence" value="ECO:0007669"/>
    <property type="project" value="InterPro"/>
</dbReference>
<dbReference type="GO" id="GO:0000105">
    <property type="term" value="P:L-histidine biosynthetic process"/>
    <property type="evidence" value="ECO:0007669"/>
    <property type="project" value="UniProtKB-UniRule"/>
</dbReference>
<dbReference type="CDD" id="cd00609">
    <property type="entry name" value="AAT_like"/>
    <property type="match status" value="1"/>
</dbReference>
<dbReference type="Gene3D" id="3.90.1150.10">
    <property type="entry name" value="Aspartate Aminotransferase, domain 1"/>
    <property type="match status" value="1"/>
</dbReference>
<dbReference type="Gene3D" id="3.40.640.10">
    <property type="entry name" value="Type I PLP-dependent aspartate aminotransferase-like (Major domain)"/>
    <property type="match status" value="1"/>
</dbReference>
<dbReference type="HAMAP" id="MF_01023">
    <property type="entry name" value="HisC_aminotrans_2"/>
    <property type="match status" value="1"/>
</dbReference>
<dbReference type="InterPro" id="IPR001917">
    <property type="entry name" value="Aminotrans_II_pyridoxalP_BS"/>
</dbReference>
<dbReference type="InterPro" id="IPR004839">
    <property type="entry name" value="Aminotransferase_I/II_large"/>
</dbReference>
<dbReference type="InterPro" id="IPR005861">
    <property type="entry name" value="HisP_aminotrans"/>
</dbReference>
<dbReference type="InterPro" id="IPR015424">
    <property type="entry name" value="PyrdxlP-dep_Trfase"/>
</dbReference>
<dbReference type="InterPro" id="IPR015421">
    <property type="entry name" value="PyrdxlP-dep_Trfase_major"/>
</dbReference>
<dbReference type="InterPro" id="IPR015422">
    <property type="entry name" value="PyrdxlP-dep_Trfase_small"/>
</dbReference>
<dbReference type="NCBIfam" id="TIGR01141">
    <property type="entry name" value="hisC"/>
    <property type="match status" value="1"/>
</dbReference>
<dbReference type="NCBIfam" id="NF002877">
    <property type="entry name" value="PRK03317.1"/>
    <property type="match status" value="1"/>
</dbReference>
<dbReference type="PANTHER" id="PTHR42885:SF2">
    <property type="entry name" value="HISTIDINOL-PHOSPHATE AMINOTRANSFERASE"/>
    <property type="match status" value="1"/>
</dbReference>
<dbReference type="PANTHER" id="PTHR42885">
    <property type="entry name" value="HISTIDINOL-PHOSPHATE AMINOTRANSFERASE-RELATED"/>
    <property type="match status" value="1"/>
</dbReference>
<dbReference type="Pfam" id="PF00155">
    <property type="entry name" value="Aminotran_1_2"/>
    <property type="match status" value="1"/>
</dbReference>
<dbReference type="SUPFAM" id="SSF53383">
    <property type="entry name" value="PLP-dependent transferases"/>
    <property type="match status" value="1"/>
</dbReference>
<dbReference type="PROSITE" id="PS00599">
    <property type="entry name" value="AA_TRANSFER_CLASS_2"/>
    <property type="match status" value="1"/>
</dbReference>
<reference key="1">
    <citation type="journal article" date="2007" name="Genome Res.">
        <title>Reductive evolution and niche adaptation inferred from the genome of Mycobacterium ulcerans, the causative agent of Buruli ulcer.</title>
        <authorList>
            <person name="Stinear T.P."/>
            <person name="Seemann T."/>
            <person name="Pidot S."/>
            <person name="Frigui W."/>
            <person name="Reysset G."/>
            <person name="Garnier T."/>
            <person name="Meurice G."/>
            <person name="Simon D."/>
            <person name="Bouchier C."/>
            <person name="Ma L."/>
            <person name="Tichit M."/>
            <person name="Porter J.L."/>
            <person name="Ryan J."/>
            <person name="Johnson P.D.R."/>
            <person name="Davies J.K."/>
            <person name="Jenkin G.A."/>
            <person name="Small P.L.C."/>
            <person name="Jones L.M."/>
            <person name="Tekaia F."/>
            <person name="Laval F."/>
            <person name="Daffe M."/>
            <person name="Parkhill J."/>
            <person name="Cole S.T."/>
        </authorList>
    </citation>
    <scope>NUCLEOTIDE SEQUENCE [LARGE SCALE GENOMIC DNA]</scope>
    <source>
        <strain>Agy99</strain>
    </source>
</reference>